<evidence type="ECO:0000255" key="1">
    <source>
        <dbReference type="HAMAP-Rule" id="MF_01350"/>
    </source>
</evidence>
<gene>
    <name evidence="1" type="primary">ndhA</name>
</gene>
<keyword id="KW-0150">Chloroplast</keyword>
<keyword id="KW-0472">Membrane</keyword>
<keyword id="KW-0520">NAD</keyword>
<keyword id="KW-0521">NADP</keyword>
<keyword id="KW-0934">Plastid</keyword>
<keyword id="KW-0618">Plastoquinone</keyword>
<keyword id="KW-0874">Quinone</keyword>
<keyword id="KW-0793">Thylakoid</keyword>
<keyword id="KW-1278">Translocase</keyword>
<keyword id="KW-0812">Transmembrane</keyword>
<keyword id="KW-1133">Transmembrane helix</keyword>
<reference key="1">
    <citation type="journal article" date="2005" name="Mol. Biol. Evol.">
        <title>Analysis of Acorus calamus chloroplast genome and its phylogenetic implications.</title>
        <authorList>
            <person name="Goremykin V.V."/>
            <person name="Holland B."/>
            <person name="Hirsch-Ernst K.I."/>
            <person name="Hellwig F.H."/>
        </authorList>
    </citation>
    <scope>NUCLEOTIDE SEQUENCE [LARGE SCALE GENOMIC DNA]</scope>
</reference>
<feature type="chain" id="PRO_0000240014" description="NAD(P)H-quinone oxidoreductase subunit 1, chloroplastic">
    <location>
        <begin position="1"/>
        <end position="365"/>
    </location>
</feature>
<feature type="transmembrane region" description="Helical" evidence="1">
    <location>
        <begin position="29"/>
        <end position="49"/>
    </location>
</feature>
<feature type="transmembrane region" description="Helical" evidence="1">
    <location>
        <begin position="106"/>
        <end position="126"/>
    </location>
</feature>
<feature type="transmembrane region" description="Helical" evidence="1">
    <location>
        <begin position="129"/>
        <end position="149"/>
    </location>
</feature>
<feature type="transmembrane region" description="Helical" evidence="1">
    <location>
        <begin position="250"/>
        <end position="270"/>
    </location>
</feature>
<feature type="transmembrane region" description="Helical" evidence="1">
    <location>
        <begin position="302"/>
        <end position="322"/>
    </location>
</feature>
<feature type="transmembrane region" description="Helical" evidence="1">
    <location>
        <begin position="338"/>
        <end position="358"/>
    </location>
</feature>
<protein>
    <recommendedName>
        <fullName evidence="1">NAD(P)H-quinone oxidoreductase subunit 1, chloroplastic</fullName>
        <ecNumber evidence="1">7.1.1.-</ecNumber>
    </recommendedName>
    <alternativeName>
        <fullName evidence="1">NAD(P)H dehydrogenase subunit 1</fullName>
        <shortName evidence="1">NDH subunit 1</shortName>
    </alternativeName>
    <alternativeName>
        <fullName evidence="1">NADH-plastoquinone oxidoreductase subunit 1</fullName>
    </alternativeName>
</protein>
<geneLocation type="chloroplast"/>
<sequence length="365" mass="40097">MIIATTEIQAINSFSRSESLSLKEVYGLIWLLVPIFTLILVIIIGVLVIVWLEREISAGIQQRIGPEYAGPLGILQALADGTKLLFKEDLLPSRGDISLFSLGPSIAVISTLLSYLVIPFGYHLVLADLSIGVFLWIAISSIAPIGLLMSGYGSNNKYSFSGGLRAAAQSISYEIPLTLCVLSISLLSNSSSTVDIVEAQSKYGFWGWNLWRQPIGFLVFLVSSLAECERLPFDLPEAEEELVAGYQTEYSGIKFGLFYVASYLNLLVSSLFVTVLYLGGWNLSIPYIFIPELFGKNKTGGIFGMTIGILITLAKAYLFLFISIATRWTLPRLRIDQLLNLGWKFLLPISLGNLLLTTSSQLVSL</sequence>
<name>NU1C_ACOCL</name>
<dbReference type="EC" id="7.1.1.-" evidence="1"/>
<dbReference type="EMBL" id="AJ879453">
    <property type="protein sequence ID" value="CAI53849.1"/>
    <property type="molecule type" value="Genomic_DNA"/>
</dbReference>
<dbReference type="RefSeq" id="YP_319818.1">
    <property type="nucleotide sequence ID" value="NC_007407.1"/>
</dbReference>
<dbReference type="SMR" id="Q3V4X9"/>
<dbReference type="GeneID" id="3677516"/>
<dbReference type="GO" id="GO:0009535">
    <property type="term" value="C:chloroplast thylakoid membrane"/>
    <property type="evidence" value="ECO:0007669"/>
    <property type="project" value="UniProtKB-SubCell"/>
</dbReference>
<dbReference type="GO" id="GO:0003954">
    <property type="term" value="F:NADH dehydrogenase activity"/>
    <property type="evidence" value="ECO:0007669"/>
    <property type="project" value="TreeGrafter"/>
</dbReference>
<dbReference type="GO" id="GO:0016655">
    <property type="term" value="F:oxidoreductase activity, acting on NAD(P)H, quinone or similar compound as acceptor"/>
    <property type="evidence" value="ECO:0007669"/>
    <property type="project" value="UniProtKB-UniRule"/>
</dbReference>
<dbReference type="GO" id="GO:0048038">
    <property type="term" value="F:quinone binding"/>
    <property type="evidence" value="ECO:0007669"/>
    <property type="project" value="UniProtKB-KW"/>
</dbReference>
<dbReference type="GO" id="GO:0009060">
    <property type="term" value="P:aerobic respiration"/>
    <property type="evidence" value="ECO:0007669"/>
    <property type="project" value="TreeGrafter"/>
</dbReference>
<dbReference type="GO" id="GO:0019684">
    <property type="term" value="P:photosynthesis, light reaction"/>
    <property type="evidence" value="ECO:0007669"/>
    <property type="project" value="UniProtKB-UniRule"/>
</dbReference>
<dbReference type="HAMAP" id="MF_01350">
    <property type="entry name" value="NDH1_NuoH"/>
    <property type="match status" value="1"/>
</dbReference>
<dbReference type="InterPro" id="IPR001694">
    <property type="entry name" value="NADH_UbQ_OxRdtase_su1/FPO"/>
</dbReference>
<dbReference type="InterPro" id="IPR018086">
    <property type="entry name" value="NADH_UbQ_OxRdtase_su1_CS"/>
</dbReference>
<dbReference type="NCBIfam" id="NF004741">
    <property type="entry name" value="PRK06076.1-2"/>
    <property type="match status" value="1"/>
</dbReference>
<dbReference type="PANTHER" id="PTHR11432">
    <property type="entry name" value="NADH DEHYDROGENASE SUBUNIT 1"/>
    <property type="match status" value="1"/>
</dbReference>
<dbReference type="PANTHER" id="PTHR11432:SF3">
    <property type="entry name" value="NADH-UBIQUINONE OXIDOREDUCTASE CHAIN 1"/>
    <property type="match status" value="1"/>
</dbReference>
<dbReference type="Pfam" id="PF00146">
    <property type="entry name" value="NADHdh"/>
    <property type="match status" value="1"/>
</dbReference>
<dbReference type="PROSITE" id="PS00667">
    <property type="entry name" value="COMPLEX1_ND1_1"/>
    <property type="match status" value="1"/>
</dbReference>
<dbReference type="PROSITE" id="PS00668">
    <property type="entry name" value="COMPLEX1_ND1_2"/>
    <property type="match status" value="1"/>
</dbReference>
<organism>
    <name type="scientific">Acorus calamus</name>
    <name type="common">Sweet flag</name>
    <dbReference type="NCBI Taxonomy" id="4465"/>
    <lineage>
        <taxon>Eukaryota</taxon>
        <taxon>Viridiplantae</taxon>
        <taxon>Streptophyta</taxon>
        <taxon>Embryophyta</taxon>
        <taxon>Tracheophyta</taxon>
        <taxon>Spermatophyta</taxon>
        <taxon>Magnoliopsida</taxon>
        <taxon>Liliopsida</taxon>
        <taxon>Acoraceae</taxon>
        <taxon>Acorus</taxon>
    </lineage>
</organism>
<proteinExistence type="inferred from homology"/>
<comment type="function">
    <text evidence="1">NDH shuttles electrons from NAD(P)H:plastoquinone, via FMN and iron-sulfur (Fe-S) centers, to quinones in the photosynthetic chain and possibly in a chloroplast respiratory chain. The immediate electron acceptor for the enzyme in this species is believed to be plastoquinone. Couples the redox reaction to proton translocation, and thus conserves the redox energy in a proton gradient.</text>
</comment>
<comment type="catalytic activity">
    <reaction evidence="1">
        <text>a plastoquinone + NADH + (n+1) H(+)(in) = a plastoquinol + NAD(+) + n H(+)(out)</text>
        <dbReference type="Rhea" id="RHEA:42608"/>
        <dbReference type="Rhea" id="RHEA-COMP:9561"/>
        <dbReference type="Rhea" id="RHEA-COMP:9562"/>
        <dbReference type="ChEBI" id="CHEBI:15378"/>
        <dbReference type="ChEBI" id="CHEBI:17757"/>
        <dbReference type="ChEBI" id="CHEBI:57540"/>
        <dbReference type="ChEBI" id="CHEBI:57945"/>
        <dbReference type="ChEBI" id="CHEBI:62192"/>
    </reaction>
</comment>
<comment type="catalytic activity">
    <reaction evidence="1">
        <text>a plastoquinone + NADPH + (n+1) H(+)(in) = a plastoquinol + NADP(+) + n H(+)(out)</text>
        <dbReference type="Rhea" id="RHEA:42612"/>
        <dbReference type="Rhea" id="RHEA-COMP:9561"/>
        <dbReference type="Rhea" id="RHEA-COMP:9562"/>
        <dbReference type="ChEBI" id="CHEBI:15378"/>
        <dbReference type="ChEBI" id="CHEBI:17757"/>
        <dbReference type="ChEBI" id="CHEBI:57783"/>
        <dbReference type="ChEBI" id="CHEBI:58349"/>
        <dbReference type="ChEBI" id="CHEBI:62192"/>
    </reaction>
</comment>
<comment type="subunit">
    <text evidence="1">NDH is composed of at least 16 different subunits, 5 of which are encoded in the nucleus.</text>
</comment>
<comment type="subcellular location">
    <subcellularLocation>
        <location evidence="1">Plastid</location>
        <location evidence="1">Chloroplast thylakoid membrane</location>
        <topology evidence="1">Multi-pass membrane protein</topology>
    </subcellularLocation>
</comment>
<comment type="similarity">
    <text evidence="1">Belongs to the complex I subunit 1 family.</text>
</comment>
<accession>Q3V4X9</accession>